<comment type="function">
    <text evidence="1">Bifunctional enzyme that catalyzes the epimerization of the S- and R-forms of NAD(P)HX and the dehydration of the S-form of NAD(P)HX at the expense of ADP, which is converted to AMP. This allows the repair of both epimers of NAD(P)HX, a damaged form of NAD(P)H that is a result of enzymatic or heat-dependent hydration (By similarity).</text>
</comment>
<comment type="catalytic activity">
    <reaction>
        <text>(6S)-NADHX + ADP = AMP + phosphate + NADH + H(+)</text>
        <dbReference type="Rhea" id="RHEA:32223"/>
        <dbReference type="ChEBI" id="CHEBI:15378"/>
        <dbReference type="ChEBI" id="CHEBI:43474"/>
        <dbReference type="ChEBI" id="CHEBI:57945"/>
        <dbReference type="ChEBI" id="CHEBI:64074"/>
        <dbReference type="ChEBI" id="CHEBI:456215"/>
        <dbReference type="ChEBI" id="CHEBI:456216"/>
        <dbReference type="EC" id="4.2.1.136"/>
    </reaction>
</comment>
<comment type="catalytic activity">
    <reaction>
        <text>(6S)-NADPHX + ADP = AMP + phosphate + NADPH + H(+)</text>
        <dbReference type="Rhea" id="RHEA:32235"/>
        <dbReference type="ChEBI" id="CHEBI:15378"/>
        <dbReference type="ChEBI" id="CHEBI:43474"/>
        <dbReference type="ChEBI" id="CHEBI:57783"/>
        <dbReference type="ChEBI" id="CHEBI:64076"/>
        <dbReference type="ChEBI" id="CHEBI:456215"/>
        <dbReference type="ChEBI" id="CHEBI:456216"/>
        <dbReference type="EC" id="4.2.1.136"/>
    </reaction>
</comment>
<comment type="catalytic activity">
    <reaction>
        <text>(6R)-NADHX = (6S)-NADHX</text>
        <dbReference type="Rhea" id="RHEA:32215"/>
        <dbReference type="ChEBI" id="CHEBI:64074"/>
        <dbReference type="ChEBI" id="CHEBI:64075"/>
        <dbReference type="EC" id="5.1.99.6"/>
    </reaction>
</comment>
<comment type="catalytic activity">
    <reaction>
        <text>(6R)-NADPHX = (6S)-NADPHX</text>
        <dbReference type="Rhea" id="RHEA:32227"/>
        <dbReference type="ChEBI" id="CHEBI:64076"/>
        <dbReference type="ChEBI" id="CHEBI:64077"/>
        <dbReference type="EC" id="5.1.99.6"/>
    </reaction>
</comment>
<comment type="cofactor">
    <cofactor evidence="1">
        <name>K(+)</name>
        <dbReference type="ChEBI" id="CHEBI:29103"/>
    </cofactor>
    <text evidence="1">Binds 1 potassium ion per subunit.</text>
</comment>
<comment type="similarity">
    <text evidence="2">In the N-terminal section; belongs to the NnrE/AIBP family.</text>
</comment>
<comment type="similarity">
    <text evidence="2">In the C-terminal section; belongs to the NnrD/CARKD family.</text>
</comment>
<accession>P9WF10</accession>
<accession>L0TFL5</accession>
<accession>O06250</accession>
<gene>
    <name type="primary">nnr</name>
    <name type="ordered locus">MT3539</name>
</gene>
<sequence>MRHYYSVDTIRAAEAPLLASLPDGALMRRAAFGLATEIGRELTARTGGVVGRRVCAVVGSGDNGGDALWAATFLRRRGAAADAVLLNPDRTHRKALAAFTKSGGRLVESVSAATDLVIDGVVGISGSGPLRPAAAQVFAAVQAAAIPVVAVDIPSGIDVATGAITGPAVHAALTVTFGGLKPVHALADCGRVVLVDIGLDLAHTDVLGFEATDVAARWPVPGPRDDKYTQGVTGVLAGSSTYPGAAVLCTGAAVAATSGMVRYAGTAHAEVLAHWPEVIASPTPAAAGRVQAWVVGPGLGTDEAGAAALWFALDTDLPVLVDADGLTMLADHPDLVAGRNAPTVLTPHAGEFARLAGAPPGDDRVGACRQLADALGATVLLKGNVTVIADPGGPVYLNPAGQSWAATAGSGDVLSGMIGALLASGLPSGEAAAAAAFVHARASAAAAADPGPGDAPTSASRISGHIRAALAAL</sequence>
<name>NNR_MYCTO</name>
<keyword id="KW-0067">ATP-binding</keyword>
<keyword id="KW-0413">Isomerase</keyword>
<keyword id="KW-0456">Lyase</keyword>
<keyword id="KW-0479">Metal-binding</keyword>
<keyword id="KW-0511">Multifunctional enzyme</keyword>
<keyword id="KW-0520">NAD</keyword>
<keyword id="KW-0521">NADP</keyword>
<keyword id="KW-0547">Nucleotide-binding</keyword>
<keyword id="KW-0630">Potassium</keyword>
<keyword id="KW-1185">Reference proteome</keyword>
<feature type="chain" id="PRO_0000428620" description="Bifunctional NAD(P)H-hydrate repair enzyme Nnr">
    <location>
        <begin position="1"/>
        <end position="473"/>
    </location>
</feature>
<feature type="domain" description="YjeF N-terminal">
    <location>
        <begin position="10"/>
        <end position="205"/>
    </location>
</feature>
<feature type="domain" description="YjeF C-terminal">
    <location>
        <begin position="210"/>
        <end position="473"/>
    </location>
</feature>
<feature type="region of interest" description="NAD(P)H-hydrate epimerase" evidence="1">
    <location>
        <begin position="1"/>
        <end position="211"/>
    </location>
</feature>
<feature type="region of interest" description="NADPHX 1; for epimerase activity" evidence="1">
    <location>
        <begin position="62"/>
        <end position="66"/>
    </location>
</feature>
<feature type="region of interest" description="NADPHX 1; for epimerase activity" evidence="1">
    <location>
        <begin position="123"/>
        <end position="129"/>
    </location>
</feature>
<feature type="region of interest" description="ADP-dependent (S)-NAD(P)H-hydrate dehydratase" evidence="1">
    <location>
        <begin position="211"/>
        <end position="473"/>
    </location>
</feature>
<feature type="region of interest" description="NADPHX 2; for dehydratase activity" evidence="1">
    <location>
        <begin position="348"/>
        <end position="354"/>
    </location>
</feature>
<feature type="binding site" evidence="1">
    <location>
        <position position="63"/>
    </location>
    <ligand>
        <name>K(+)</name>
        <dbReference type="ChEBI" id="CHEBI:29103"/>
    </ligand>
</feature>
<feature type="binding site" evidence="1">
    <location>
        <position position="119"/>
    </location>
    <ligand>
        <name>K(+)</name>
        <dbReference type="ChEBI" id="CHEBI:29103"/>
    </ligand>
</feature>
<feature type="binding site" evidence="1">
    <location>
        <position position="152"/>
    </location>
    <ligand>
        <name>(6S)-NADPHX</name>
        <dbReference type="ChEBI" id="CHEBI:64076"/>
        <label>1</label>
        <note>for epimerase activity</note>
    </ligand>
</feature>
<feature type="binding site" evidence="1">
    <location>
        <position position="155"/>
    </location>
    <ligand>
        <name>K(+)</name>
        <dbReference type="ChEBI" id="CHEBI:29103"/>
    </ligand>
</feature>
<feature type="binding site" evidence="1">
    <location>
        <position position="298"/>
    </location>
    <ligand>
        <name>(6S)-NADPHX</name>
        <dbReference type="ChEBI" id="CHEBI:64076"/>
        <label>2</label>
        <note>for dehydratase activity</note>
    </ligand>
</feature>
<feature type="binding site" evidence="1">
    <location>
        <begin position="382"/>
        <end position="386"/>
    </location>
    <ligand>
        <name>ADP</name>
        <dbReference type="ChEBI" id="CHEBI:456216"/>
    </ligand>
</feature>
<feature type="binding site" evidence="1">
    <location>
        <begin position="402"/>
        <end position="411"/>
    </location>
    <ligand>
        <name>ADP</name>
        <dbReference type="ChEBI" id="CHEBI:456216"/>
    </ligand>
</feature>
<feature type="binding site" evidence="1">
    <location>
        <position position="412"/>
    </location>
    <ligand>
        <name>(6S)-NADPHX</name>
        <dbReference type="ChEBI" id="CHEBI:64076"/>
        <label>2</label>
        <note>for dehydratase activity</note>
    </ligand>
</feature>
<protein>
    <recommendedName>
        <fullName>Bifunctional NAD(P)H-hydrate repair enzyme Nnr</fullName>
    </recommendedName>
    <alternativeName>
        <fullName>Nicotinamide nucleotide repair protein</fullName>
    </alternativeName>
    <domain>
        <recommendedName>
            <fullName>ADP-dependent (S)-NAD(P)H-hydrate dehydratase</fullName>
            <ecNumber>4.2.1.136</ecNumber>
        </recommendedName>
        <alternativeName>
            <fullName>ADP-dependent NAD(P)HX dehydratase</fullName>
        </alternativeName>
    </domain>
    <domain>
        <recommendedName>
            <fullName>NAD(P)H-hydrate epimerase</fullName>
            <ecNumber>5.1.99.6</ecNumber>
        </recommendedName>
        <alternativeName>
            <fullName>NAD(P)HX epimerase</fullName>
        </alternativeName>
    </domain>
</protein>
<reference key="1">
    <citation type="journal article" date="2002" name="J. Bacteriol.">
        <title>Whole-genome comparison of Mycobacterium tuberculosis clinical and laboratory strains.</title>
        <authorList>
            <person name="Fleischmann R.D."/>
            <person name="Alland D."/>
            <person name="Eisen J.A."/>
            <person name="Carpenter L."/>
            <person name="White O."/>
            <person name="Peterson J.D."/>
            <person name="DeBoy R.T."/>
            <person name="Dodson R.J."/>
            <person name="Gwinn M.L."/>
            <person name="Haft D.H."/>
            <person name="Hickey E.K."/>
            <person name="Kolonay J.F."/>
            <person name="Nelson W.C."/>
            <person name="Umayam L.A."/>
            <person name="Ermolaeva M.D."/>
            <person name="Salzberg S.L."/>
            <person name="Delcher A."/>
            <person name="Utterback T.R."/>
            <person name="Weidman J.F."/>
            <person name="Khouri H.M."/>
            <person name="Gill J."/>
            <person name="Mikula A."/>
            <person name="Bishai W."/>
            <person name="Jacobs W.R. Jr."/>
            <person name="Venter J.C."/>
            <person name="Fraser C.M."/>
        </authorList>
    </citation>
    <scope>NUCLEOTIDE SEQUENCE [LARGE SCALE GENOMIC DNA]</scope>
    <source>
        <strain>CDC 1551 / Oshkosh</strain>
    </source>
</reference>
<dbReference type="EC" id="4.2.1.136"/>
<dbReference type="EC" id="5.1.99.6"/>
<dbReference type="EMBL" id="AE000516">
    <property type="protein sequence ID" value="AAK47879.1"/>
    <property type="molecule type" value="Genomic_DNA"/>
</dbReference>
<dbReference type="PIR" id="G70975">
    <property type="entry name" value="G70975"/>
</dbReference>
<dbReference type="RefSeq" id="WP_003912231.1">
    <property type="nucleotide sequence ID" value="NZ_KK341227.1"/>
</dbReference>
<dbReference type="SMR" id="P9WF10"/>
<dbReference type="KEGG" id="mtc:MT3539"/>
<dbReference type="PATRIC" id="fig|83331.31.peg.3796"/>
<dbReference type="HOGENOM" id="CLU_024853_4_0_11"/>
<dbReference type="Proteomes" id="UP000001020">
    <property type="component" value="Chromosome"/>
</dbReference>
<dbReference type="GO" id="GO:0052855">
    <property type="term" value="F:ADP-dependent NAD(P)H-hydrate dehydratase activity"/>
    <property type="evidence" value="ECO:0007669"/>
    <property type="project" value="UniProtKB-UniRule"/>
</dbReference>
<dbReference type="GO" id="GO:0005524">
    <property type="term" value="F:ATP binding"/>
    <property type="evidence" value="ECO:0007669"/>
    <property type="project" value="UniProtKB-KW"/>
</dbReference>
<dbReference type="GO" id="GO:0046872">
    <property type="term" value="F:metal ion binding"/>
    <property type="evidence" value="ECO:0007669"/>
    <property type="project" value="UniProtKB-KW"/>
</dbReference>
<dbReference type="GO" id="GO:0052856">
    <property type="term" value="F:NAD(P)HX epimerase activity"/>
    <property type="evidence" value="ECO:0007669"/>
    <property type="project" value="UniProtKB-UniRule"/>
</dbReference>
<dbReference type="GO" id="GO:0110051">
    <property type="term" value="P:metabolite repair"/>
    <property type="evidence" value="ECO:0007669"/>
    <property type="project" value="TreeGrafter"/>
</dbReference>
<dbReference type="GO" id="GO:0046496">
    <property type="term" value="P:nicotinamide nucleotide metabolic process"/>
    <property type="evidence" value="ECO:0007669"/>
    <property type="project" value="UniProtKB-UniRule"/>
</dbReference>
<dbReference type="CDD" id="cd01171">
    <property type="entry name" value="YXKO-related"/>
    <property type="match status" value="1"/>
</dbReference>
<dbReference type="FunFam" id="3.40.1190.20:FF:000052">
    <property type="entry name" value="Multifunctional fusion protein"/>
    <property type="match status" value="1"/>
</dbReference>
<dbReference type="FunFam" id="3.40.50.10260:FF:000008">
    <property type="entry name" value="Multifunctional fusion protein"/>
    <property type="match status" value="1"/>
</dbReference>
<dbReference type="Gene3D" id="3.40.1190.20">
    <property type="match status" value="1"/>
</dbReference>
<dbReference type="Gene3D" id="3.40.50.10260">
    <property type="entry name" value="YjeF N-terminal domain"/>
    <property type="match status" value="1"/>
</dbReference>
<dbReference type="HAMAP" id="MF_01965">
    <property type="entry name" value="NADHX_dehydratase"/>
    <property type="match status" value="1"/>
</dbReference>
<dbReference type="HAMAP" id="MF_01966">
    <property type="entry name" value="NADHX_epimerase"/>
    <property type="match status" value="1"/>
</dbReference>
<dbReference type="InterPro" id="IPR017953">
    <property type="entry name" value="Carbohydrate_kinase_pred_CS"/>
</dbReference>
<dbReference type="InterPro" id="IPR000631">
    <property type="entry name" value="CARKD"/>
</dbReference>
<dbReference type="InterPro" id="IPR030677">
    <property type="entry name" value="Nnr"/>
</dbReference>
<dbReference type="InterPro" id="IPR029056">
    <property type="entry name" value="Ribokinase-like"/>
</dbReference>
<dbReference type="InterPro" id="IPR004443">
    <property type="entry name" value="YjeF_N_dom"/>
</dbReference>
<dbReference type="InterPro" id="IPR036652">
    <property type="entry name" value="YjeF_N_dom_sf"/>
</dbReference>
<dbReference type="NCBIfam" id="TIGR00196">
    <property type="entry name" value="yjeF_cterm"/>
    <property type="match status" value="1"/>
</dbReference>
<dbReference type="NCBIfam" id="TIGR00197">
    <property type="entry name" value="yjeF_nterm"/>
    <property type="match status" value="1"/>
</dbReference>
<dbReference type="PANTHER" id="PTHR12592:SF0">
    <property type="entry name" value="ATP-DEPENDENT (S)-NAD(P)H-HYDRATE DEHYDRATASE"/>
    <property type="match status" value="1"/>
</dbReference>
<dbReference type="PANTHER" id="PTHR12592">
    <property type="entry name" value="ATP-DEPENDENT (S)-NAD(P)H-HYDRATE DEHYDRATASE FAMILY MEMBER"/>
    <property type="match status" value="1"/>
</dbReference>
<dbReference type="Pfam" id="PF01256">
    <property type="entry name" value="Carb_kinase"/>
    <property type="match status" value="1"/>
</dbReference>
<dbReference type="Pfam" id="PF03853">
    <property type="entry name" value="YjeF_N"/>
    <property type="match status" value="1"/>
</dbReference>
<dbReference type="PIRSF" id="PIRSF017184">
    <property type="entry name" value="Nnr"/>
    <property type="match status" value="1"/>
</dbReference>
<dbReference type="SUPFAM" id="SSF53613">
    <property type="entry name" value="Ribokinase-like"/>
    <property type="match status" value="1"/>
</dbReference>
<dbReference type="SUPFAM" id="SSF64153">
    <property type="entry name" value="YjeF N-terminal domain-like"/>
    <property type="match status" value="1"/>
</dbReference>
<dbReference type="PROSITE" id="PS01049">
    <property type="entry name" value="YJEF_C_1"/>
    <property type="match status" value="1"/>
</dbReference>
<dbReference type="PROSITE" id="PS01050">
    <property type="entry name" value="YJEF_C_2"/>
    <property type="match status" value="1"/>
</dbReference>
<dbReference type="PROSITE" id="PS51383">
    <property type="entry name" value="YJEF_C_3"/>
    <property type="match status" value="1"/>
</dbReference>
<dbReference type="PROSITE" id="PS51385">
    <property type="entry name" value="YJEF_N"/>
    <property type="match status" value="1"/>
</dbReference>
<evidence type="ECO:0000250" key="1"/>
<evidence type="ECO:0000305" key="2"/>
<proteinExistence type="inferred from homology"/>
<organism>
    <name type="scientific">Mycobacterium tuberculosis (strain CDC 1551 / Oshkosh)</name>
    <dbReference type="NCBI Taxonomy" id="83331"/>
    <lineage>
        <taxon>Bacteria</taxon>
        <taxon>Bacillati</taxon>
        <taxon>Actinomycetota</taxon>
        <taxon>Actinomycetes</taxon>
        <taxon>Mycobacteriales</taxon>
        <taxon>Mycobacteriaceae</taxon>
        <taxon>Mycobacterium</taxon>
        <taxon>Mycobacterium tuberculosis complex</taxon>
    </lineage>
</organism>